<proteinExistence type="evidence at protein level"/>
<evidence type="ECO:0000250" key="1">
    <source>
        <dbReference type="UniProtKB" id="O08625"/>
    </source>
</evidence>
<evidence type="ECO:0000250" key="2">
    <source>
        <dbReference type="UniProtKB" id="O35681"/>
    </source>
</evidence>
<evidence type="ECO:0000250" key="3">
    <source>
        <dbReference type="UniProtKB" id="P40748"/>
    </source>
</evidence>
<evidence type="ECO:0000255" key="4"/>
<evidence type="ECO:0000255" key="5">
    <source>
        <dbReference type="PROSITE-ProRule" id="PRU00041"/>
    </source>
</evidence>
<evidence type="ECO:0000269" key="6">
    <source>
    </source>
</evidence>
<evidence type="ECO:0000269" key="7">
    <source>
    </source>
</evidence>
<evidence type="ECO:0000269" key="8">
    <source>
    </source>
</evidence>
<evidence type="ECO:0000269" key="9">
    <source>
    </source>
</evidence>
<evidence type="ECO:0000269" key="10">
    <source>
    </source>
</evidence>
<evidence type="ECO:0000303" key="11">
    <source>
    </source>
</evidence>
<evidence type="ECO:0000305" key="12"/>
<evidence type="ECO:0000305" key="13">
    <source>
    </source>
</evidence>
<evidence type="ECO:0000312" key="14">
    <source>
        <dbReference type="MGI" id="MGI:1859546"/>
    </source>
</evidence>
<evidence type="ECO:0007744" key="15">
    <source>
    </source>
</evidence>
<name>SYT10_MOUSE</name>
<keyword id="KW-0106">Calcium</keyword>
<keyword id="KW-0968">Cytoplasmic vesicle</keyword>
<keyword id="KW-1015">Disulfide bond</keyword>
<keyword id="KW-0268">Exocytosis</keyword>
<keyword id="KW-0472">Membrane</keyword>
<keyword id="KW-0479">Metal-binding</keyword>
<keyword id="KW-0597">Phosphoprotein</keyword>
<keyword id="KW-1185">Reference proteome</keyword>
<keyword id="KW-0677">Repeat</keyword>
<keyword id="KW-0812">Transmembrane</keyword>
<keyword id="KW-1133">Transmembrane helix</keyword>
<feature type="chain" id="PRO_0000183966" description="Synaptotagmin-10">
    <location>
        <begin position="1"/>
        <end position="523"/>
    </location>
</feature>
<feature type="topological domain" description="Vesicular" evidence="4">
    <location>
        <begin position="1"/>
        <end position="55"/>
    </location>
</feature>
<feature type="transmembrane region" description="Helical" evidence="4">
    <location>
        <begin position="56"/>
        <end position="76"/>
    </location>
</feature>
<feature type="topological domain" description="Cytoplasmic" evidence="4">
    <location>
        <begin position="77"/>
        <end position="523"/>
    </location>
</feature>
<feature type="domain" description="C2 1" evidence="5">
    <location>
        <begin position="231"/>
        <end position="352"/>
    </location>
</feature>
<feature type="domain" description="C2 2" evidence="5">
    <location>
        <begin position="363"/>
        <end position="496"/>
    </location>
</feature>
<feature type="region of interest" description="Cysteine motif" evidence="2">
    <location>
        <begin position="13"/>
        <end position="35"/>
    </location>
</feature>
<feature type="binding site" evidence="5">
    <location>
        <position position="262"/>
    </location>
    <ligand>
        <name>Ca(2+)</name>
        <dbReference type="ChEBI" id="CHEBI:29108"/>
        <label>1</label>
    </ligand>
</feature>
<feature type="binding site" evidence="5">
    <location>
        <position position="262"/>
    </location>
    <ligand>
        <name>Ca(2+)</name>
        <dbReference type="ChEBI" id="CHEBI:29108"/>
        <label>2</label>
    </ligand>
</feature>
<feature type="binding site" evidence="5">
    <location>
        <position position="268"/>
    </location>
    <ligand>
        <name>Ca(2+)</name>
        <dbReference type="ChEBI" id="CHEBI:29108"/>
        <label>1</label>
    </ligand>
</feature>
<feature type="binding site" evidence="5">
    <location>
        <position position="320"/>
    </location>
    <ligand>
        <name>Ca(2+)</name>
        <dbReference type="ChEBI" id="CHEBI:29108"/>
        <label>1</label>
    </ligand>
</feature>
<feature type="binding site" evidence="5">
    <location>
        <position position="320"/>
    </location>
    <ligand>
        <name>Ca(2+)</name>
        <dbReference type="ChEBI" id="CHEBI:29108"/>
        <label>2</label>
    </ligand>
</feature>
<feature type="binding site" evidence="5">
    <location>
        <position position="321"/>
    </location>
    <ligand>
        <name>Ca(2+)</name>
        <dbReference type="ChEBI" id="CHEBI:29108"/>
        <label>1</label>
    </ligand>
</feature>
<feature type="binding site" evidence="5">
    <location>
        <position position="322"/>
    </location>
    <ligand>
        <name>Ca(2+)</name>
        <dbReference type="ChEBI" id="CHEBI:29108"/>
        <label>1</label>
    </ligand>
</feature>
<feature type="binding site" evidence="5">
    <location>
        <position position="322"/>
    </location>
    <ligand>
        <name>Ca(2+)</name>
        <dbReference type="ChEBI" id="CHEBI:29108"/>
        <label>2</label>
    </ligand>
</feature>
<feature type="binding site" evidence="5">
    <location>
        <position position="322"/>
    </location>
    <ligand>
        <name>Ca(2+)</name>
        <dbReference type="ChEBI" id="CHEBI:29108"/>
        <label>3</label>
    </ligand>
</feature>
<feature type="binding site" evidence="5">
    <location>
        <position position="325"/>
    </location>
    <ligand>
        <name>Ca(2+)</name>
        <dbReference type="ChEBI" id="CHEBI:29108"/>
        <label>3</label>
    </ligand>
</feature>
<feature type="binding site" evidence="5">
    <location>
        <position position="328"/>
    </location>
    <ligand>
        <name>Ca(2+)</name>
        <dbReference type="ChEBI" id="CHEBI:29108"/>
        <label>2</label>
    </ligand>
</feature>
<feature type="binding site" evidence="5">
    <location>
        <position position="328"/>
    </location>
    <ligand>
        <name>Ca(2+)</name>
        <dbReference type="ChEBI" id="CHEBI:29108"/>
        <label>3</label>
    </ligand>
</feature>
<feature type="binding site" evidence="5">
    <location>
        <position position="394"/>
    </location>
    <ligand>
        <name>Ca(2+)</name>
        <dbReference type="ChEBI" id="CHEBI:29108"/>
        <label>4</label>
    </ligand>
</feature>
<feature type="binding site" evidence="5">
    <location>
        <position position="400"/>
    </location>
    <ligand>
        <name>Ca(2+)</name>
        <dbReference type="ChEBI" id="CHEBI:29108"/>
        <label>4</label>
    </ligand>
</feature>
<feature type="binding site" evidence="5">
    <location>
        <position position="454"/>
    </location>
    <ligand>
        <name>Ca(2+)</name>
        <dbReference type="ChEBI" id="CHEBI:29108"/>
        <label>4</label>
    </ligand>
</feature>
<feature type="binding site" evidence="5">
    <location>
        <position position="456"/>
    </location>
    <ligand>
        <name>Ca(2+)</name>
        <dbReference type="ChEBI" id="CHEBI:29108"/>
        <label>4</label>
    </ligand>
</feature>
<feature type="modified residue" description="Phosphothreonine" evidence="15">
    <location>
        <position position="136"/>
    </location>
</feature>
<feature type="mutagenesis site" description="Loss of function; when associated with A-320; A-322; A-400; A-454 and A-456." evidence="9">
    <original>D</original>
    <variation>A</variation>
    <location>
        <position position="268"/>
    </location>
</feature>
<feature type="mutagenesis site" description="Loss of function; when associated with A-268; A-322; A-400; A-454 and A-456." evidence="9">
    <original>D</original>
    <variation>A</variation>
    <location>
        <position position="320"/>
    </location>
</feature>
<feature type="mutagenesis site" description="Loss of function; when associated with A-268; A-320; A-400; A-454 and A-456." evidence="9">
    <original>D</original>
    <variation>A</variation>
    <location>
        <position position="322"/>
    </location>
</feature>
<feature type="mutagenesis site" description="Loss of function; when associated with A-268; A-320; A-322; A-454 and A-456." evidence="9">
    <original>D</original>
    <variation>A</variation>
    <location>
        <position position="400"/>
    </location>
</feature>
<feature type="mutagenesis site" description="Loss of function; when associated with A-268; A-320; A-322; A-400 and A-456." evidence="9">
    <original>D</original>
    <variation>A</variation>
    <location>
        <position position="454"/>
    </location>
</feature>
<feature type="mutagenesis site" description="Loss of function; when associated with A-268; A-320; A-322; A-400 and A-454." evidence="9">
    <original>D</original>
    <variation>A</variation>
    <location>
        <position position="456"/>
    </location>
</feature>
<protein>
    <recommendedName>
        <fullName evidence="12">Synaptotagmin-10</fullName>
    </recommendedName>
    <alternativeName>
        <fullName evidence="11">Synaptotagmin X</fullName>
        <shortName evidence="11">SytX</shortName>
    </alternativeName>
</protein>
<sequence>MSFRKEDGVSSLCQKALHIITELCFAGQVEWDKCSGIFPADRSGQGGGGTDISVSLLAVVVSFCGLALLVVSLFVFWKLCWPCWKSKLVAPNLSVLPQSISSAPTEVFETEEKKEVEENEKPAPKAIEPAIKISHTSPDIPAEVQTALKEHLIKHARVQRQTTEPTSSSRHNSFRRHLPRQMNVSSVDFSVGTEPILQRGETRTSIGRIKPELYKQKSVDSEGNRKDDVKTCGKLNFALQYDYENELLVVKIIKALDLPAKDFTGTSDPYVKIYLLPDRKKKFQTRVHRKTLNPLFDELFQFPVVYDQLSNRKLHFSIYDFDRFSRHDMIGEVILDNLFEVSDLSREATVWKDIHCATTESIDLGEIMFSLCYLPTAGRMTLTVIKCRNLKAMDITGSSDPYVKVSLMCEGRRLKKRKTTTKKNTLNPVYNEAIIFDIPPENVDQVSLCIAVMDYDRVGHNEVIGVCRTGLDAEGLGRDHWNEMLAYHRKPITHWHPLLELPGRATSFDSQGSCSSPRPPSTP</sequence>
<organism>
    <name type="scientific">Mus musculus</name>
    <name type="common">Mouse</name>
    <dbReference type="NCBI Taxonomy" id="10090"/>
    <lineage>
        <taxon>Eukaryota</taxon>
        <taxon>Metazoa</taxon>
        <taxon>Chordata</taxon>
        <taxon>Craniata</taxon>
        <taxon>Vertebrata</taxon>
        <taxon>Euteleostomi</taxon>
        <taxon>Mammalia</taxon>
        <taxon>Eutheria</taxon>
        <taxon>Euarchontoglires</taxon>
        <taxon>Glires</taxon>
        <taxon>Rodentia</taxon>
        <taxon>Myomorpha</taxon>
        <taxon>Muroidea</taxon>
        <taxon>Muridae</taxon>
        <taxon>Murinae</taxon>
        <taxon>Mus</taxon>
        <taxon>Mus</taxon>
    </lineage>
</organism>
<comment type="function">
    <text evidence="1 9">Ca(2+) sensor specifically required for the Ca(2+)-dependent exocytosis of secretory vesicles containing IGF1 in neurons of the olfactory bulb (PubMed:21496647). Exocytosis of IGF1 is required for sensory perception of smell (PubMed:21496647). Not involved in Ca(2+)-dependent synaptic vesicle exocytosis (PubMed:21496647). Acts through Ca(2+) and phospholipid binding to the C2 domain: Ca(2+) induces binding of the C2-domains to phospholipid membranes and to assembled SNARE-complexes; both actions contribute to triggering exocytosis (By similarity).</text>
</comment>
<comment type="cofactor">
    <cofactor evidence="5 13">
        <name>Ca(2+)</name>
        <dbReference type="ChEBI" id="CHEBI:29108"/>
    </cofactor>
    <text evidence="3">Binds 3 Ca(2+) ions per subunit. The ions are bound to the C2 domains.</text>
</comment>
<comment type="subunit">
    <text evidence="6 7 8">Homodimer; disulfide-linked via the cysteine motif (PubMed:10531343). Can also form heterodimers with SYT3, SYT6, SYT7 and SYT9 (PubMed:10531343, PubMed:10531344, PubMed:10871604).</text>
</comment>
<comment type="interaction">
    <interactant intactId="EBI-5239459">
        <id>Q9R0N4</id>
    </interactant>
    <interactant intactId="EBI-5239459">
        <id>Q9R0N4</id>
        <label>Syt10</label>
    </interactant>
    <organismsDiffer>false</organismsDiffer>
    <experiments>2</experiments>
</comment>
<comment type="interaction">
    <interactant intactId="EBI-5239459">
        <id>Q9R0N4</id>
    </interactant>
    <interactant intactId="EBI-457995">
        <id>O35681</id>
        <label>Syt3</label>
    </interactant>
    <organismsDiffer>false</organismsDiffer>
    <experiments>2</experiments>
</comment>
<comment type="interaction">
    <interactant intactId="EBI-5239459">
        <id>Q9R0N4</id>
    </interactant>
    <interactant intactId="EBI-5239378">
        <id>Q9R0N8</id>
        <label>Syt6</label>
    </interactant>
    <organismsDiffer>false</organismsDiffer>
    <experiments>2</experiments>
</comment>
<comment type="interaction">
    <interactant intactId="EBI-5239459">
        <id>Q9R0N4</id>
    </interactant>
    <interactant intactId="EBI-458006">
        <id>Q9R0N9</id>
        <label>Syt9</label>
    </interactant>
    <organismsDiffer>false</organismsDiffer>
    <experiments>2</experiments>
</comment>
<comment type="subcellular location">
    <subcellularLocation>
        <location evidence="9 10">Cytoplasmic vesicle</location>
        <location evidence="9 10">Secretory vesicle membrane</location>
        <topology evidence="4">Single-pass membrane protein</topology>
    </subcellularLocation>
    <text evidence="9 10">Localizes to neuronal vesicles containing IGF1 that are not enriched at synapses (PubMed:21496647, PubMed:23345244). Does not colocalize with synaptic vesicles or with the Golgi apparatus (PubMed:21496647, PubMed:23345244).</text>
</comment>
<comment type="tissue specificity">
    <text evidence="13">Highly expressed in the olfactory bulb.</text>
</comment>
<comment type="domain">
    <text evidence="2">The cysteine motif mediates homo- or heterodimer formation via formation of disulfide bonds.</text>
</comment>
<comment type="domain">
    <text evidence="1">The first C2 domain mediates Ca(2+)-dependent phospholipid binding.</text>
</comment>
<comment type="disruption phenotype">
    <text evidence="9">Impaired food-finding behaviors due to defects in sensory perception of smell. Decreased number of olfactory bulb synapses in the external plexiform layer, but not the glomerular layer, of the olfactory bulb. The size and dendritic arborization of olfactory bulb neurons are decreased, but not the synapse density per dendritic length. Defects are due to impaired exocytosis of IGF1 in neurons of the olfactory bulb.</text>
</comment>
<comment type="similarity">
    <text evidence="12">Belongs to the synaptotagmin family.</text>
</comment>
<gene>
    <name evidence="14" type="primary">Syt10</name>
</gene>
<accession>Q9R0N4</accession>
<reference key="1">
    <citation type="journal article" date="1999" name="J. Biol. Chem.">
        <title>Conserved N-terminal cysteine motif is essential for homo- and heterodimer formation of synaptotagmins III, V, VI, and X.</title>
        <authorList>
            <person name="Fukuda M."/>
            <person name="Kanno E."/>
            <person name="Mikoshiba K."/>
        </authorList>
    </citation>
    <scope>NUCLEOTIDE SEQUENCE [MRNA]</scope>
    <scope>SUBUNIT</scope>
    <scope>DISULFIDE BOND</scope>
    <source>
        <strain>ICR</strain>
        <tissue>Cerebellum</tissue>
    </source>
</reference>
<reference key="2">
    <citation type="journal article" date="1999" name="J. Biol. Chem.">
        <title>A novel alternatively spliced variant of synaptotagmin VI lacking a transmembrane domain. Implications for distinct functions of the two isoforms.</title>
        <authorList>
            <person name="Fukuda M."/>
            <person name="Mikoshiba K."/>
        </authorList>
    </citation>
    <scope>SUBUNIT</scope>
    <source>
        <strain>ICR</strain>
        <tissue>Cerebellum</tissue>
    </source>
</reference>
<reference key="3">
    <citation type="journal article" date="2000" name="J. Biol. Chem.">
        <title>Distinct self-oligomerization activities of synaptotagmin family. Unique calcium-dependent oligomerization properties of synaptotagmin VII.</title>
        <authorList>
            <person name="Fukuda M."/>
            <person name="Mikoshiba K."/>
        </authorList>
    </citation>
    <scope>SUBUNIT</scope>
</reference>
<reference key="4">
    <citation type="journal article" date="2010" name="Cell">
        <title>A tissue-specific atlas of mouse protein phosphorylation and expression.</title>
        <authorList>
            <person name="Huttlin E.L."/>
            <person name="Jedrychowski M.P."/>
            <person name="Elias J.E."/>
            <person name="Goswami T."/>
            <person name="Rad R."/>
            <person name="Beausoleil S.A."/>
            <person name="Villen J."/>
            <person name="Haas W."/>
            <person name="Sowa M.E."/>
            <person name="Gygi S.P."/>
        </authorList>
    </citation>
    <scope>PHOSPHORYLATION [LARGE SCALE ANALYSIS] AT THR-136</scope>
    <scope>IDENTIFICATION BY MASS SPECTROMETRY [LARGE SCALE ANALYSIS]</scope>
    <source>
        <tissue>Brain</tissue>
    </source>
</reference>
<reference key="5">
    <citation type="journal article" date="2011" name="Cell">
        <title>Activity-dependent IGF-1 exocytosis is controlled by the Ca(2+)-sensor synaptotagmin-10.</title>
        <authorList>
            <person name="Cao P."/>
            <person name="Maximov A."/>
            <person name="Suedhof T.C."/>
        </authorList>
    </citation>
    <scope>FUNCTION</scope>
    <scope>SUBCELLULAR LOCATION</scope>
    <scope>TISSUE SPECIFICITY</scope>
    <scope>DISRUPTION PHENOTYPE</scope>
    <scope>MUTAGENESIS OF ASP-268; ASP-320; ASP-322; ASP-400; ASP-454 AND ASP-456</scope>
</reference>
<reference key="6">
    <citation type="journal article" date="2013" name="J. Neurosci.">
        <title>Complexin activates exocytosis of distinct secretory vesicles controlled by different synaptotagmins.</title>
        <authorList>
            <person name="Cao P."/>
            <person name="Yang X."/>
            <person name="Suedhof T.C."/>
        </authorList>
    </citation>
    <scope>SUBCELLULAR LOCATION</scope>
</reference>
<dbReference type="EMBL" id="AB026807">
    <property type="protein sequence ID" value="BAA85779.1"/>
    <property type="molecule type" value="mRNA"/>
</dbReference>
<dbReference type="CCDS" id="CCDS27756.1"/>
<dbReference type="RefSeq" id="NP_061273.1">
    <property type="nucleotide sequence ID" value="NM_018803.2"/>
</dbReference>
<dbReference type="SMR" id="Q9R0N4"/>
<dbReference type="BioGRID" id="207674">
    <property type="interactions" value="1"/>
</dbReference>
<dbReference type="FunCoup" id="Q9R0N4">
    <property type="interactions" value="15"/>
</dbReference>
<dbReference type="IntAct" id="Q9R0N4">
    <property type="interactions" value="3"/>
</dbReference>
<dbReference type="STRING" id="10090.ENSMUSP00000029441"/>
<dbReference type="iPTMnet" id="Q9R0N4"/>
<dbReference type="PhosphoSitePlus" id="Q9R0N4"/>
<dbReference type="PaxDb" id="10090-ENSMUSP00000029441"/>
<dbReference type="ProteomicsDB" id="263192"/>
<dbReference type="ABCD" id="Q9R0N4">
    <property type="antibodies" value="1 sequenced antibody"/>
</dbReference>
<dbReference type="Antibodypedia" id="67234">
    <property type="antibodies" value="146 antibodies from 26 providers"/>
</dbReference>
<dbReference type="DNASU" id="54526"/>
<dbReference type="Ensembl" id="ENSMUST00000029441.4">
    <property type="protein sequence ID" value="ENSMUSP00000029441.4"/>
    <property type="gene ID" value="ENSMUSG00000063260.3"/>
</dbReference>
<dbReference type="GeneID" id="54526"/>
<dbReference type="KEGG" id="mmu:54526"/>
<dbReference type="UCSC" id="uc007xhi.2">
    <property type="organism name" value="mouse"/>
</dbReference>
<dbReference type="AGR" id="MGI:1859546"/>
<dbReference type="CTD" id="341359"/>
<dbReference type="MGI" id="MGI:1859546">
    <property type="gene designation" value="Syt10"/>
</dbReference>
<dbReference type="VEuPathDB" id="HostDB:ENSMUSG00000063260"/>
<dbReference type="eggNOG" id="KOG1028">
    <property type="taxonomic scope" value="Eukaryota"/>
</dbReference>
<dbReference type="GeneTree" id="ENSGT00940000158899"/>
<dbReference type="HOGENOM" id="CLU_023008_8_3_1"/>
<dbReference type="InParanoid" id="Q9R0N4"/>
<dbReference type="OMA" id="IWKDIHC"/>
<dbReference type="OrthoDB" id="67700at2759"/>
<dbReference type="PhylomeDB" id="Q9R0N4"/>
<dbReference type="TreeFam" id="TF315600"/>
<dbReference type="BioGRID-ORCS" id="54526">
    <property type="hits" value="2 hits in 76 CRISPR screens"/>
</dbReference>
<dbReference type="ChiTaRS" id="Syt10">
    <property type="organism name" value="mouse"/>
</dbReference>
<dbReference type="PRO" id="PR:Q9R0N4"/>
<dbReference type="Proteomes" id="UP000000589">
    <property type="component" value="Chromosome 15"/>
</dbReference>
<dbReference type="RNAct" id="Q9R0N4">
    <property type="molecule type" value="protein"/>
</dbReference>
<dbReference type="Bgee" id="ENSMUSG00000063260">
    <property type="expression patterns" value="Expressed in urethra and 48 other cell types or tissues"/>
</dbReference>
<dbReference type="ExpressionAtlas" id="Q9R0N4">
    <property type="expression patterns" value="baseline and differential"/>
</dbReference>
<dbReference type="GO" id="GO:0070382">
    <property type="term" value="C:exocytic vesicle"/>
    <property type="evidence" value="ECO:0000314"/>
    <property type="project" value="UniProtKB"/>
</dbReference>
<dbReference type="GO" id="GO:0098978">
    <property type="term" value="C:glutamatergic synapse"/>
    <property type="evidence" value="ECO:0000314"/>
    <property type="project" value="SynGO"/>
</dbReference>
<dbReference type="GO" id="GO:0098793">
    <property type="term" value="C:presynapse"/>
    <property type="evidence" value="ECO:0000314"/>
    <property type="project" value="SynGO"/>
</dbReference>
<dbReference type="GO" id="GO:0030658">
    <property type="term" value="C:transport vesicle membrane"/>
    <property type="evidence" value="ECO:0007669"/>
    <property type="project" value="UniProtKB-SubCell"/>
</dbReference>
<dbReference type="GO" id="GO:0005509">
    <property type="term" value="F:calcium ion binding"/>
    <property type="evidence" value="ECO:0000315"/>
    <property type="project" value="UniProtKB"/>
</dbReference>
<dbReference type="GO" id="GO:0042802">
    <property type="term" value="F:identical protein binding"/>
    <property type="evidence" value="ECO:0000353"/>
    <property type="project" value="IntAct"/>
</dbReference>
<dbReference type="GO" id="GO:0005546">
    <property type="term" value="F:phosphatidylinositol-4,5-bisphosphate binding"/>
    <property type="evidence" value="ECO:0000314"/>
    <property type="project" value="ParkinsonsUK-UCL"/>
</dbReference>
<dbReference type="GO" id="GO:0001786">
    <property type="term" value="F:phosphatidylserine binding"/>
    <property type="evidence" value="ECO:0000314"/>
    <property type="project" value="ParkinsonsUK-UCL"/>
</dbReference>
<dbReference type="GO" id="GO:0046982">
    <property type="term" value="F:protein heterodimerization activity"/>
    <property type="evidence" value="ECO:0000353"/>
    <property type="project" value="UniProtKB"/>
</dbReference>
<dbReference type="GO" id="GO:0042803">
    <property type="term" value="F:protein homodimerization activity"/>
    <property type="evidence" value="ECO:0000314"/>
    <property type="project" value="BHF-UCL"/>
</dbReference>
<dbReference type="GO" id="GO:0000149">
    <property type="term" value="F:SNARE binding"/>
    <property type="evidence" value="ECO:0000314"/>
    <property type="project" value="ParkinsonsUK-UCL"/>
</dbReference>
<dbReference type="GO" id="GO:0007268">
    <property type="term" value="P:chemical synaptic transmission"/>
    <property type="evidence" value="ECO:0000315"/>
    <property type="project" value="UniProtKB"/>
</dbReference>
<dbReference type="GO" id="GO:0045956">
    <property type="term" value="P:positive regulation of calcium ion-dependent exocytosis"/>
    <property type="evidence" value="ECO:0000315"/>
    <property type="project" value="UniProtKB"/>
</dbReference>
<dbReference type="GO" id="GO:0099525">
    <property type="term" value="P:presynaptic dense core vesicle exocytosis"/>
    <property type="evidence" value="ECO:0000314"/>
    <property type="project" value="SynGO"/>
</dbReference>
<dbReference type="GO" id="GO:0017158">
    <property type="term" value="P:regulation of calcium ion-dependent exocytosis"/>
    <property type="evidence" value="ECO:0000315"/>
    <property type="project" value="ParkinsonsUK-UCL"/>
</dbReference>
<dbReference type="GO" id="GO:0007608">
    <property type="term" value="P:sensory perception of smell"/>
    <property type="evidence" value="ECO:0000315"/>
    <property type="project" value="UniProtKB"/>
</dbReference>
<dbReference type="CDD" id="cd08385">
    <property type="entry name" value="C2A_Synaptotagmin-1-5-6-9-10"/>
    <property type="match status" value="1"/>
</dbReference>
<dbReference type="CDD" id="cd08403">
    <property type="entry name" value="C2B_Synaptotagmin-3-5-6-9-10"/>
    <property type="match status" value="1"/>
</dbReference>
<dbReference type="FunFam" id="2.60.40.150:FF:000005">
    <property type="entry name" value="Synaptotagmin 6"/>
    <property type="match status" value="1"/>
</dbReference>
<dbReference type="FunFam" id="2.60.40.150:FF:000011">
    <property type="entry name" value="Synaptotagmin 6"/>
    <property type="match status" value="1"/>
</dbReference>
<dbReference type="Gene3D" id="2.60.40.150">
    <property type="entry name" value="C2 domain"/>
    <property type="match status" value="2"/>
</dbReference>
<dbReference type="InterPro" id="IPR000008">
    <property type="entry name" value="C2_dom"/>
</dbReference>
<dbReference type="InterPro" id="IPR035892">
    <property type="entry name" value="C2_domain_sf"/>
</dbReference>
<dbReference type="InterPro" id="IPR001565">
    <property type="entry name" value="Synaptotagmin"/>
</dbReference>
<dbReference type="PANTHER" id="PTHR10024">
    <property type="entry name" value="SYNAPTOTAGMIN"/>
    <property type="match status" value="1"/>
</dbReference>
<dbReference type="PANTHER" id="PTHR10024:SF46">
    <property type="entry name" value="SYNAPTOTAGMIN-10"/>
    <property type="match status" value="1"/>
</dbReference>
<dbReference type="Pfam" id="PF00168">
    <property type="entry name" value="C2"/>
    <property type="match status" value="2"/>
</dbReference>
<dbReference type="PRINTS" id="PR00360">
    <property type="entry name" value="C2DOMAIN"/>
</dbReference>
<dbReference type="PRINTS" id="PR00399">
    <property type="entry name" value="SYNAPTOTAGMN"/>
</dbReference>
<dbReference type="SMART" id="SM00239">
    <property type="entry name" value="C2"/>
    <property type="match status" value="2"/>
</dbReference>
<dbReference type="SUPFAM" id="SSF49562">
    <property type="entry name" value="C2 domain (Calcium/lipid-binding domain, CaLB)"/>
    <property type="match status" value="2"/>
</dbReference>
<dbReference type="PROSITE" id="PS50004">
    <property type="entry name" value="C2"/>
    <property type="match status" value="2"/>
</dbReference>